<name>YIDC_COREF</name>
<accession>Q8FLS3</accession>
<proteinExistence type="inferred from homology"/>
<sequence length="397" mass="45512">MLDFLIYPVSGVMKLWHLLLHNGLGLDDSLAWFISLFGLVITVRAIIAPFTWKMYKSGRLTAQIRPKRVAIAEEFKGRHDEDSIREMQQKYKDLNKEYGINPFAGCVPTLIQIPVILGLYQVLLLMARPEGGLENPVPRSIGFLSAEEVQSFLQGRVFNVPLPAYVTMPAEQLTFLGTTREDVLSFVLPLFIVAAVFTAFNMALSTYRNIQTNDYASNISNGMFKAFLWLAVLAPLFPLVLGLTGPFPTAIALYWVANNLWTFGQTAIMHYIIERNYPLTEEFKEHHAAQRATYREQQRKKRAFLWTRRKNRLMMILTPHRAAELHAQNAEMTRERTERIRAEKATKKEIATKRRAAERKINQQKMEEARRRRQARRAGDKSNGEQPETDATDPSGK</sequence>
<keyword id="KW-1003">Cell membrane</keyword>
<keyword id="KW-0143">Chaperone</keyword>
<keyword id="KW-0472">Membrane</keyword>
<keyword id="KW-0653">Protein transport</keyword>
<keyword id="KW-1185">Reference proteome</keyword>
<keyword id="KW-0812">Transmembrane</keyword>
<keyword id="KW-1133">Transmembrane helix</keyword>
<keyword id="KW-0813">Transport</keyword>
<dbReference type="EMBL" id="BA000035">
    <property type="protein sequence ID" value="BAC19597.1"/>
    <property type="molecule type" value="Genomic_DNA"/>
</dbReference>
<dbReference type="RefSeq" id="WP_006768844.1">
    <property type="nucleotide sequence ID" value="NC_004369.1"/>
</dbReference>
<dbReference type="SMR" id="Q8FLS3"/>
<dbReference type="STRING" id="196164.gene:10743235"/>
<dbReference type="KEGG" id="cef:CE2787"/>
<dbReference type="eggNOG" id="COG0706">
    <property type="taxonomic scope" value="Bacteria"/>
</dbReference>
<dbReference type="HOGENOM" id="CLU_036138_2_0_11"/>
<dbReference type="OrthoDB" id="9780552at2"/>
<dbReference type="Proteomes" id="UP000001409">
    <property type="component" value="Chromosome"/>
</dbReference>
<dbReference type="GO" id="GO:0005886">
    <property type="term" value="C:plasma membrane"/>
    <property type="evidence" value="ECO:0007669"/>
    <property type="project" value="UniProtKB-SubCell"/>
</dbReference>
<dbReference type="GO" id="GO:0032977">
    <property type="term" value="F:membrane insertase activity"/>
    <property type="evidence" value="ECO:0007669"/>
    <property type="project" value="InterPro"/>
</dbReference>
<dbReference type="GO" id="GO:0051205">
    <property type="term" value="P:protein insertion into membrane"/>
    <property type="evidence" value="ECO:0007669"/>
    <property type="project" value="TreeGrafter"/>
</dbReference>
<dbReference type="GO" id="GO:0015031">
    <property type="term" value="P:protein transport"/>
    <property type="evidence" value="ECO:0007669"/>
    <property type="project" value="UniProtKB-KW"/>
</dbReference>
<dbReference type="CDD" id="cd20070">
    <property type="entry name" value="5TM_YidC_Alb3"/>
    <property type="match status" value="1"/>
</dbReference>
<dbReference type="InterPro" id="IPR001708">
    <property type="entry name" value="YidC/ALB3/OXA1/COX18"/>
</dbReference>
<dbReference type="InterPro" id="IPR028055">
    <property type="entry name" value="YidC/Oxa/ALB_C"/>
</dbReference>
<dbReference type="InterPro" id="IPR047196">
    <property type="entry name" value="YidC_ALB_C"/>
</dbReference>
<dbReference type="NCBIfam" id="NF001300">
    <property type="entry name" value="PRK00247.1"/>
    <property type="match status" value="1"/>
</dbReference>
<dbReference type="NCBIfam" id="TIGR03592">
    <property type="entry name" value="yidC_oxa1_cterm"/>
    <property type="match status" value="1"/>
</dbReference>
<dbReference type="PANTHER" id="PTHR12428:SF65">
    <property type="entry name" value="CYTOCHROME C OXIDASE ASSEMBLY PROTEIN COX18, MITOCHONDRIAL"/>
    <property type="match status" value="1"/>
</dbReference>
<dbReference type="PANTHER" id="PTHR12428">
    <property type="entry name" value="OXA1"/>
    <property type="match status" value="1"/>
</dbReference>
<dbReference type="Pfam" id="PF02096">
    <property type="entry name" value="60KD_IMP"/>
    <property type="match status" value="1"/>
</dbReference>
<protein>
    <recommendedName>
        <fullName>Membrane protein insertase YidC</fullName>
    </recommendedName>
    <alternativeName>
        <fullName>Foldase YidC</fullName>
    </alternativeName>
    <alternativeName>
        <fullName>Membrane integrase YidC</fullName>
    </alternativeName>
    <alternativeName>
        <fullName>Membrane protein YidC</fullName>
    </alternativeName>
</protein>
<gene>
    <name type="primary">yidC</name>
    <name type="ordered locus">CE2787</name>
</gene>
<evidence type="ECO:0000250" key="1"/>
<evidence type="ECO:0000255" key="2"/>
<evidence type="ECO:0000256" key="3">
    <source>
        <dbReference type="SAM" id="MobiDB-lite"/>
    </source>
</evidence>
<evidence type="ECO:0000305" key="4"/>
<feature type="chain" id="PRO_0000124708" description="Membrane protein insertase YidC">
    <location>
        <begin position="1"/>
        <end position="397"/>
    </location>
</feature>
<feature type="transmembrane region" description="Helical" evidence="2">
    <location>
        <begin position="30"/>
        <end position="50"/>
    </location>
</feature>
<feature type="transmembrane region" description="Helical" evidence="2">
    <location>
        <begin position="107"/>
        <end position="127"/>
    </location>
</feature>
<feature type="transmembrane region" description="Helical" evidence="2">
    <location>
        <begin position="183"/>
        <end position="203"/>
    </location>
</feature>
<feature type="transmembrane region" description="Helical" evidence="2">
    <location>
        <begin position="227"/>
        <end position="247"/>
    </location>
</feature>
<feature type="transmembrane region" description="Helical" evidence="2">
    <location>
        <begin position="253"/>
        <end position="273"/>
    </location>
</feature>
<feature type="region of interest" description="Disordered" evidence="3">
    <location>
        <begin position="327"/>
        <end position="397"/>
    </location>
</feature>
<feature type="compositionally biased region" description="Basic and acidic residues" evidence="3">
    <location>
        <begin position="332"/>
        <end position="352"/>
    </location>
</feature>
<feature type="compositionally biased region" description="Basic and acidic residues" evidence="3">
    <location>
        <begin position="358"/>
        <end position="370"/>
    </location>
</feature>
<reference key="1">
    <citation type="journal article" date="2003" name="Genome Res.">
        <title>Comparative complete genome sequence analysis of the amino acid replacements responsible for the thermostability of Corynebacterium efficiens.</title>
        <authorList>
            <person name="Nishio Y."/>
            <person name="Nakamura Y."/>
            <person name="Kawarabayasi Y."/>
            <person name="Usuda Y."/>
            <person name="Kimura E."/>
            <person name="Sugimoto S."/>
            <person name="Matsui K."/>
            <person name="Yamagishi A."/>
            <person name="Kikuchi H."/>
            <person name="Ikeo K."/>
            <person name="Gojobori T."/>
        </authorList>
    </citation>
    <scope>NUCLEOTIDE SEQUENCE [LARGE SCALE GENOMIC DNA]</scope>
    <source>
        <strain>DSM 44549 / YS-314 / AJ 12310 / JCM 11189 / NBRC 100395</strain>
    </source>
</reference>
<organism>
    <name type="scientific">Corynebacterium efficiens (strain DSM 44549 / YS-314 / AJ 12310 / JCM 11189 / NBRC 100395)</name>
    <dbReference type="NCBI Taxonomy" id="196164"/>
    <lineage>
        <taxon>Bacteria</taxon>
        <taxon>Bacillati</taxon>
        <taxon>Actinomycetota</taxon>
        <taxon>Actinomycetes</taxon>
        <taxon>Mycobacteriales</taxon>
        <taxon>Corynebacteriaceae</taxon>
        <taxon>Corynebacterium</taxon>
    </lineage>
</organism>
<comment type="function">
    <text evidence="1">Required for the insertion and/or proper folding and/or complex formation of integral membrane proteins into the membrane. Involved in integration of membrane proteins that insert both dependently and independently of the Sec translocase complex, as well as at least some lipoproteins. Aids folding of multispanning membrane proteins (By similarity).</text>
</comment>
<comment type="subunit">
    <text evidence="1">Interacts with the Sec translocase complex via SecD. Specifically interacts with transmembrane segments of nascent integral membrane proteins during membrane integration (By similarity).</text>
</comment>
<comment type="subcellular location">
    <subcellularLocation>
        <location evidence="1">Cell membrane</location>
        <topology evidence="1">Multi-pass membrane protein</topology>
    </subcellularLocation>
</comment>
<comment type="similarity">
    <text evidence="4">Belongs to the OXA1/ALB3/YidC family. Type 1 subfamily.</text>
</comment>